<sequence>MAHCSTTAPFVDAMPASPQVTPAESEVVEVDEANDRPWVTVVWDDPVNLMHYVTYIFQKLFGYSKARATELMMQVHSEGKAVVSSGSRDKVENDVRKLHAAGLWATMQRDSS</sequence>
<proteinExistence type="inferred from homology"/>
<name>CLPS_RHOOB</name>
<evidence type="ECO:0000255" key="1">
    <source>
        <dbReference type="HAMAP-Rule" id="MF_00302"/>
    </source>
</evidence>
<gene>
    <name evidence="1" type="primary">clpS</name>
    <name type="ordered locus">ROP_11500</name>
</gene>
<feature type="chain" id="PRO_1000132814" description="ATP-dependent Clp protease adapter protein ClpS">
    <location>
        <begin position="1"/>
        <end position="112"/>
    </location>
</feature>
<dbReference type="EMBL" id="AP011115">
    <property type="protein sequence ID" value="BAH49397.1"/>
    <property type="molecule type" value="Genomic_DNA"/>
</dbReference>
<dbReference type="RefSeq" id="WP_012688376.1">
    <property type="nucleotide sequence ID" value="NC_012522.1"/>
</dbReference>
<dbReference type="SMR" id="C1AVW7"/>
<dbReference type="STRING" id="632772.ROP_11500"/>
<dbReference type="KEGG" id="rop:ROP_11500"/>
<dbReference type="PATRIC" id="fig|632772.20.peg.1220"/>
<dbReference type="HOGENOM" id="CLU_153743_0_0_11"/>
<dbReference type="Proteomes" id="UP000002212">
    <property type="component" value="Chromosome"/>
</dbReference>
<dbReference type="GO" id="GO:0030163">
    <property type="term" value="P:protein catabolic process"/>
    <property type="evidence" value="ECO:0007669"/>
    <property type="project" value="InterPro"/>
</dbReference>
<dbReference type="GO" id="GO:0006508">
    <property type="term" value="P:proteolysis"/>
    <property type="evidence" value="ECO:0007669"/>
    <property type="project" value="UniProtKB-UniRule"/>
</dbReference>
<dbReference type="Gene3D" id="3.30.1390.10">
    <property type="match status" value="1"/>
</dbReference>
<dbReference type="HAMAP" id="MF_00302">
    <property type="entry name" value="ClpS"/>
    <property type="match status" value="1"/>
</dbReference>
<dbReference type="InterPro" id="IPR022935">
    <property type="entry name" value="ClpS"/>
</dbReference>
<dbReference type="InterPro" id="IPR003769">
    <property type="entry name" value="ClpS_core"/>
</dbReference>
<dbReference type="InterPro" id="IPR014719">
    <property type="entry name" value="Ribosomal_bL12_C/ClpS-like"/>
</dbReference>
<dbReference type="NCBIfam" id="NF000668">
    <property type="entry name" value="PRK00033.1-1"/>
    <property type="match status" value="1"/>
</dbReference>
<dbReference type="Pfam" id="PF02617">
    <property type="entry name" value="ClpS"/>
    <property type="match status" value="1"/>
</dbReference>
<dbReference type="SUPFAM" id="SSF54736">
    <property type="entry name" value="ClpS-like"/>
    <property type="match status" value="1"/>
</dbReference>
<protein>
    <recommendedName>
        <fullName evidence="1">ATP-dependent Clp protease adapter protein ClpS</fullName>
    </recommendedName>
</protein>
<comment type="function">
    <text evidence="1">Involved in the modulation of the specificity of the ClpAP-mediated ATP-dependent protein degradation.</text>
</comment>
<comment type="subunit">
    <text evidence="1">Binds to the N-terminal domain of the chaperone ClpA.</text>
</comment>
<comment type="similarity">
    <text evidence="1">Belongs to the ClpS family.</text>
</comment>
<organism>
    <name type="scientific">Rhodococcus opacus (strain B4)</name>
    <dbReference type="NCBI Taxonomy" id="632772"/>
    <lineage>
        <taxon>Bacteria</taxon>
        <taxon>Bacillati</taxon>
        <taxon>Actinomycetota</taxon>
        <taxon>Actinomycetes</taxon>
        <taxon>Mycobacteriales</taxon>
        <taxon>Nocardiaceae</taxon>
        <taxon>Rhodococcus</taxon>
    </lineage>
</organism>
<accession>C1AVW7</accession>
<reference key="1">
    <citation type="submission" date="2009-03" db="EMBL/GenBank/DDBJ databases">
        <title>Comparison of the complete genome sequences of Rhodococcus erythropolis PR4 and Rhodococcus opacus B4.</title>
        <authorList>
            <person name="Takarada H."/>
            <person name="Sekine M."/>
            <person name="Hosoyama A."/>
            <person name="Yamada R."/>
            <person name="Fujisawa T."/>
            <person name="Omata S."/>
            <person name="Shimizu A."/>
            <person name="Tsukatani N."/>
            <person name="Tanikawa S."/>
            <person name="Fujita N."/>
            <person name="Harayama S."/>
        </authorList>
    </citation>
    <scope>NUCLEOTIDE SEQUENCE [LARGE SCALE GENOMIC DNA]</scope>
    <source>
        <strain>B4</strain>
    </source>
</reference>